<feature type="chain" id="PRO_1000205587" description="Large ribosomal subunit protein bL28">
    <location>
        <begin position="1"/>
        <end position="78"/>
    </location>
</feature>
<feature type="region of interest" description="Disordered" evidence="2">
    <location>
        <begin position="1"/>
        <end position="20"/>
    </location>
</feature>
<name>RL28_AZOVD</name>
<evidence type="ECO:0000255" key="1">
    <source>
        <dbReference type="HAMAP-Rule" id="MF_00373"/>
    </source>
</evidence>
<evidence type="ECO:0000256" key="2">
    <source>
        <dbReference type="SAM" id="MobiDB-lite"/>
    </source>
</evidence>
<evidence type="ECO:0000305" key="3"/>
<sequence length="78" mass="9023">MSRVCQVTGKGPVTGNNISHANNKTRRRFLPNLQHHRFWVESEKRFVRLRVSAKGMRIIDKRGIDVVLAELRARGEKV</sequence>
<organism>
    <name type="scientific">Azotobacter vinelandii (strain DJ / ATCC BAA-1303)</name>
    <dbReference type="NCBI Taxonomy" id="322710"/>
    <lineage>
        <taxon>Bacteria</taxon>
        <taxon>Pseudomonadati</taxon>
        <taxon>Pseudomonadota</taxon>
        <taxon>Gammaproteobacteria</taxon>
        <taxon>Pseudomonadales</taxon>
        <taxon>Pseudomonadaceae</taxon>
        <taxon>Azotobacter</taxon>
    </lineage>
</organism>
<keyword id="KW-0687">Ribonucleoprotein</keyword>
<keyword id="KW-0689">Ribosomal protein</keyword>
<dbReference type="EMBL" id="CP001157">
    <property type="protein sequence ID" value="ACO80909.1"/>
    <property type="molecule type" value="Genomic_DNA"/>
</dbReference>
<dbReference type="RefSeq" id="WP_012703271.1">
    <property type="nucleotide sequence ID" value="NC_012560.1"/>
</dbReference>
<dbReference type="SMR" id="C1DK04"/>
<dbReference type="STRING" id="322710.Avin_48050"/>
<dbReference type="EnsemblBacteria" id="ACO80909">
    <property type="protein sequence ID" value="ACO80909"/>
    <property type="gene ID" value="Avin_48050"/>
</dbReference>
<dbReference type="GeneID" id="88187676"/>
<dbReference type="KEGG" id="avn:Avin_48050"/>
<dbReference type="eggNOG" id="COG0227">
    <property type="taxonomic scope" value="Bacteria"/>
</dbReference>
<dbReference type="HOGENOM" id="CLU_064548_3_1_6"/>
<dbReference type="OrthoDB" id="9805609at2"/>
<dbReference type="Proteomes" id="UP000002424">
    <property type="component" value="Chromosome"/>
</dbReference>
<dbReference type="GO" id="GO:0022625">
    <property type="term" value="C:cytosolic large ribosomal subunit"/>
    <property type="evidence" value="ECO:0007669"/>
    <property type="project" value="TreeGrafter"/>
</dbReference>
<dbReference type="GO" id="GO:0003735">
    <property type="term" value="F:structural constituent of ribosome"/>
    <property type="evidence" value="ECO:0007669"/>
    <property type="project" value="InterPro"/>
</dbReference>
<dbReference type="GO" id="GO:0006412">
    <property type="term" value="P:translation"/>
    <property type="evidence" value="ECO:0007669"/>
    <property type="project" value="UniProtKB-UniRule"/>
</dbReference>
<dbReference type="FunFam" id="2.30.170.40:FF:000001">
    <property type="entry name" value="50S ribosomal protein L28"/>
    <property type="match status" value="1"/>
</dbReference>
<dbReference type="Gene3D" id="2.30.170.40">
    <property type="entry name" value="Ribosomal protein L28/L24"/>
    <property type="match status" value="1"/>
</dbReference>
<dbReference type="HAMAP" id="MF_00373">
    <property type="entry name" value="Ribosomal_bL28"/>
    <property type="match status" value="1"/>
</dbReference>
<dbReference type="InterPro" id="IPR026569">
    <property type="entry name" value="Ribosomal_bL28"/>
</dbReference>
<dbReference type="InterPro" id="IPR034704">
    <property type="entry name" value="Ribosomal_bL28/bL31-like_sf"/>
</dbReference>
<dbReference type="InterPro" id="IPR001383">
    <property type="entry name" value="Ribosomal_bL28_bact-type"/>
</dbReference>
<dbReference type="InterPro" id="IPR037147">
    <property type="entry name" value="Ribosomal_bL28_sf"/>
</dbReference>
<dbReference type="NCBIfam" id="TIGR00009">
    <property type="entry name" value="L28"/>
    <property type="match status" value="1"/>
</dbReference>
<dbReference type="PANTHER" id="PTHR13528">
    <property type="entry name" value="39S RIBOSOMAL PROTEIN L28, MITOCHONDRIAL"/>
    <property type="match status" value="1"/>
</dbReference>
<dbReference type="PANTHER" id="PTHR13528:SF2">
    <property type="entry name" value="LARGE RIBOSOMAL SUBUNIT PROTEIN BL28M"/>
    <property type="match status" value="1"/>
</dbReference>
<dbReference type="Pfam" id="PF00830">
    <property type="entry name" value="Ribosomal_L28"/>
    <property type="match status" value="1"/>
</dbReference>
<dbReference type="SUPFAM" id="SSF143800">
    <property type="entry name" value="L28p-like"/>
    <property type="match status" value="1"/>
</dbReference>
<gene>
    <name evidence="1" type="primary">rpmB</name>
    <name type="ordered locus">Avin_48050</name>
</gene>
<comment type="similarity">
    <text evidence="1">Belongs to the bacterial ribosomal protein bL28 family.</text>
</comment>
<proteinExistence type="inferred from homology"/>
<protein>
    <recommendedName>
        <fullName evidence="1">Large ribosomal subunit protein bL28</fullName>
    </recommendedName>
    <alternativeName>
        <fullName evidence="3">50S ribosomal protein L28</fullName>
    </alternativeName>
</protein>
<reference key="1">
    <citation type="journal article" date="2009" name="J. Bacteriol.">
        <title>Genome sequence of Azotobacter vinelandii, an obligate aerobe specialized to support diverse anaerobic metabolic processes.</title>
        <authorList>
            <person name="Setubal J.C."/>
            <person name="Dos Santos P."/>
            <person name="Goldman B.S."/>
            <person name="Ertesvaag H."/>
            <person name="Espin G."/>
            <person name="Rubio L.M."/>
            <person name="Valla S."/>
            <person name="Almeida N.F."/>
            <person name="Balasubramanian D."/>
            <person name="Cromes L."/>
            <person name="Curatti L."/>
            <person name="Du Z."/>
            <person name="Godsy E."/>
            <person name="Goodner B."/>
            <person name="Hellner-Burris K."/>
            <person name="Hernandez J.A."/>
            <person name="Houmiel K."/>
            <person name="Imperial J."/>
            <person name="Kennedy C."/>
            <person name="Larson T.J."/>
            <person name="Latreille P."/>
            <person name="Ligon L.S."/>
            <person name="Lu J."/>
            <person name="Maerk M."/>
            <person name="Miller N.M."/>
            <person name="Norton S."/>
            <person name="O'Carroll I.P."/>
            <person name="Paulsen I."/>
            <person name="Raulfs E.C."/>
            <person name="Roemer R."/>
            <person name="Rosser J."/>
            <person name="Segura D."/>
            <person name="Slater S."/>
            <person name="Stricklin S.L."/>
            <person name="Studholme D.J."/>
            <person name="Sun J."/>
            <person name="Viana C.J."/>
            <person name="Wallin E."/>
            <person name="Wang B."/>
            <person name="Wheeler C."/>
            <person name="Zhu H."/>
            <person name="Dean D.R."/>
            <person name="Dixon R."/>
            <person name="Wood D."/>
        </authorList>
    </citation>
    <scope>NUCLEOTIDE SEQUENCE [LARGE SCALE GENOMIC DNA]</scope>
    <source>
        <strain>DJ / ATCC BAA-1303</strain>
    </source>
</reference>
<accession>C1DK04</accession>